<name>FLUC2_LISMF</name>
<comment type="function">
    <text evidence="1">Fluoride-specific ion channel. Important for reducing fluoride concentration in the cell, thus reducing its toxicity.</text>
</comment>
<comment type="catalytic activity">
    <reaction evidence="1">
        <text>fluoride(in) = fluoride(out)</text>
        <dbReference type="Rhea" id="RHEA:76159"/>
        <dbReference type="ChEBI" id="CHEBI:17051"/>
    </reaction>
    <physiologicalReaction direction="left-to-right" evidence="1">
        <dbReference type="Rhea" id="RHEA:76160"/>
    </physiologicalReaction>
</comment>
<comment type="activity regulation">
    <text evidence="1">Na(+) is not transported, but it plays an essential structural role and its presence is essential for fluoride channel function.</text>
</comment>
<comment type="subcellular location">
    <subcellularLocation>
        <location evidence="1">Cell membrane</location>
        <topology evidence="1">Multi-pass membrane protein</topology>
    </subcellularLocation>
</comment>
<comment type="similarity">
    <text evidence="1">Belongs to the fluoride channel Fluc/FEX (TC 1.A.43) family.</text>
</comment>
<sequence length="129" mass="13968">MYFLYVGVFGALGGMCRYAMNLWLGGGDFPSATLAVNLIGCFLLAFLMQFLAEKSRISLVILNGIGTGFIGAFTTFSAFSVDTIQLVQSGAWLFAVSYVLASFIGGLIMVKFGRMLSNKLLNRGEHRVS</sequence>
<reference key="1">
    <citation type="journal article" date="2004" name="Nucleic Acids Res.">
        <title>Whole genome comparisons of serotype 4b and 1/2a strains of the food-borne pathogen Listeria monocytogenes reveal new insights into the core genome components of this species.</title>
        <authorList>
            <person name="Nelson K.E."/>
            <person name="Fouts D.E."/>
            <person name="Mongodin E.F."/>
            <person name="Ravel J."/>
            <person name="DeBoy R.T."/>
            <person name="Kolonay J.F."/>
            <person name="Rasko D.A."/>
            <person name="Angiuoli S.V."/>
            <person name="Gill S.R."/>
            <person name="Paulsen I.T."/>
            <person name="Peterson J.D."/>
            <person name="White O."/>
            <person name="Nelson W.C."/>
            <person name="Nierman W.C."/>
            <person name="Beanan M.J."/>
            <person name="Brinkac L.M."/>
            <person name="Daugherty S.C."/>
            <person name="Dodson R.J."/>
            <person name="Durkin A.S."/>
            <person name="Madupu R."/>
            <person name="Haft D.H."/>
            <person name="Selengut J."/>
            <person name="Van Aken S.E."/>
            <person name="Khouri H.M."/>
            <person name="Fedorova N."/>
            <person name="Forberger H.A."/>
            <person name="Tran B."/>
            <person name="Kathariou S."/>
            <person name="Wonderling L.D."/>
            <person name="Uhlich G.A."/>
            <person name="Bayles D.O."/>
            <person name="Luchansky J.B."/>
            <person name="Fraser C.M."/>
        </authorList>
    </citation>
    <scope>NUCLEOTIDE SEQUENCE [LARGE SCALE GENOMIC DNA]</scope>
    <source>
        <strain>F2365</strain>
    </source>
</reference>
<organism>
    <name type="scientific">Listeria monocytogenes serotype 4b (strain F2365)</name>
    <dbReference type="NCBI Taxonomy" id="265669"/>
    <lineage>
        <taxon>Bacteria</taxon>
        <taxon>Bacillati</taxon>
        <taxon>Bacillota</taxon>
        <taxon>Bacilli</taxon>
        <taxon>Bacillales</taxon>
        <taxon>Listeriaceae</taxon>
        <taxon>Listeria</taxon>
    </lineage>
</organism>
<evidence type="ECO:0000255" key="1">
    <source>
        <dbReference type="HAMAP-Rule" id="MF_00454"/>
    </source>
</evidence>
<keyword id="KW-1003">Cell membrane</keyword>
<keyword id="KW-0407">Ion channel</keyword>
<keyword id="KW-0406">Ion transport</keyword>
<keyword id="KW-0472">Membrane</keyword>
<keyword id="KW-0479">Metal-binding</keyword>
<keyword id="KW-0915">Sodium</keyword>
<keyword id="KW-0812">Transmembrane</keyword>
<keyword id="KW-1133">Transmembrane helix</keyword>
<keyword id="KW-0813">Transport</keyword>
<proteinExistence type="inferred from homology"/>
<gene>
    <name evidence="1" type="primary">fluC2</name>
    <name evidence="1" type="synonym">crcB2</name>
    <name type="ordered locus">LMOf2365_2114</name>
</gene>
<accession>Q71XT1</accession>
<protein>
    <recommendedName>
        <fullName evidence="1">Fluoride-specific ion channel FluC 2</fullName>
    </recommendedName>
</protein>
<dbReference type="EMBL" id="AE017262">
    <property type="protein sequence ID" value="AAT04884.1"/>
    <property type="molecule type" value="Genomic_DNA"/>
</dbReference>
<dbReference type="SMR" id="Q71XT1"/>
<dbReference type="KEGG" id="lmf:LMOf2365_2114"/>
<dbReference type="HOGENOM" id="CLU_114342_1_2_9"/>
<dbReference type="GO" id="GO:0005886">
    <property type="term" value="C:plasma membrane"/>
    <property type="evidence" value="ECO:0007669"/>
    <property type="project" value="UniProtKB-SubCell"/>
</dbReference>
<dbReference type="GO" id="GO:0062054">
    <property type="term" value="F:fluoride channel activity"/>
    <property type="evidence" value="ECO:0007669"/>
    <property type="project" value="UniProtKB-UniRule"/>
</dbReference>
<dbReference type="GO" id="GO:0046872">
    <property type="term" value="F:metal ion binding"/>
    <property type="evidence" value="ECO:0007669"/>
    <property type="project" value="UniProtKB-KW"/>
</dbReference>
<dbReference type="GO" id="GO:0140114">
    <property type="term" value="P:cellular detoxification of fluoride"/>
    <property type="evidence" value="ECO:0007669"/>
    <property type="project" value="UniProtKB-UniRule"/>
</dbReference>
<dbReference type="HAMAP" id="MF_00454">
    <property type="entry name" value="FluC"/>
    <property type="match status" value="1"/>
</dbReference>
<dbReference type="InterPro" id="IPR003691">
    <property type="entry name" value="FluC"/>
</dbReference>
<dbReference type="NCBIfam" id="TIGR00494">
    <property type="entry name" value="crcB"/>
    <property type="match status" value="1"/>
</dbReference>
<dbReference type="NCBIfam" id="NF010827">
    <property type="entry name" value="PRK14231.1"/>
    <property type="match status" value="1"/>
</dbReference>
<dbReference type="PANTHER" id="PTHR28259">
    <property type="entry name" value="FLUORIDE EXPORT PROTEIN 1-RELATED"/>
    <property type="match status" value="1"/>
</dbReference>
<dbReference type="PANTHER" id="PTHR28259:SF1">
    <property type="entry name" value="FLUORIDE EXPORT PROTEIN 1-RELATED"/>
    <property type="match status" value="1"/>
</dbReference>
<dbReference type="Pfam" id="PF02537">
    <property type="entry name" value="CRCB"/>
    <property type="match status" value="1"/>
</dbReference>
<feature type="chain" id="PRO_0000110128" description="Fluoride-specific ion channel FluC 2">
    <location>
        <begin position="1"/>
        <end position="129"/>
    </location>
</feature>
<feature type="transmembrane region" description="Helical" evidence="1">
    <location>
        <begin position="3"/>
        <end position="23"/>
    </location>
</feature>
<feature type="transmembrane region" description="Helical" evidence="1">
    <location>
        <begin position="32"/>
        <end position="52"/>
    </location>
</feature>
<feature type="transmembrane region" description="Helical" evidence="1">
    <location>
        <begin position="59"/>
        <end position="79"/>
    </location>
</feature>
<feature type="transmembrane region" description="Helical" evidence="1">
    <location>
        <begin position="90"/>
        <end position="110"/>
    </location>
</feature>
<feature type="binding site" evidence="1">
    <location>
        <position position="71"/>
    </location>
    <ligand>
        <name>Na(+)</name>
        <dbReference type="ChEBI" id="CHEBI:29101"/>
        <note>structural</note>
    </ligand>
</feature>
<feature type="binding site" evidence="1">
    <location>
        <position position="74"/>
    </location>
    <ligand>
        <name>Na(+)</name>
        <dbReference type="ChEBI" id="CHEBI:29101"/>
        <note>structural</note>
    </ligand>
</feature>